<name>RPPH_ACTSZ</name>
<protein>
    <recommendedName>
        <fullName evidence="1">RNA pyrophosphohydrolase</fullName>
        <ecNumber evidence="1">3.6.1.-</ecNumber>
    </recommendedName>
    <alternativeName>
        <fullName evidence="1">(Di)nucleoside polyphosphate hydrolase</fullName>
    </alternativeName>
</protein>
<dbReference type="EC" id="3.6.1.-" evidence="1"/>
<dbReference type="EMBL" id="CP000746">
    <property type="protein sequence ID" value="ABR74100.1"/>
    <property type="molecule type" value="Genomic_DNA"/>
</dbReference>
<dbReference type="RefSeq" id="WP_012072479.1">
    <property type="nucleotide sequence ID" value="NC_009655.1"/>
</dbReference>
<dbReference type="SMR" id="A6VMA3"/>
<dbReference type="STRING" id="339671.Asuc_0728"/>
<dbReference type="KEGG" id="asu:Asuc_0728"/>
<dbReference type="eggNOG" id="COG0494">
    <property type="taxonomic scope" value="Bacteria"/>
</dbReference>
<dbReference type="HOGENOM" id="CLU_087195_3_2_6"/>
<dbReference type="OrthoDB" id="9816040at2"/>
<dbReference type="Proteomes" id="UP000001114">
    <property type="component" value="Chromosome"/>
</dbReference>
<dbReference type="GO" id="GO:0005737">
    <property type="term" value="C:cytoplasm"/>
    <property type="evidence" value="ECO:0007669"/>
    <property type="project" value="TreeGrafter"/>
</dbReference>
<dbReference type="GO" id="GO:0034353">
    <property type="term" value="F:mRNA 5'-diphosphatase activity"/>
    <property type="evidence" value="ECO:0007669"/>
    <property type="project" value="TreeGrafter"/>
</dbReference>
<dbReference type="GO" id="GO:0006402">
    <property type="term" value="P:mRNA catabolic process"/>
    <property type="evidence" value="ECO:0007669"/>
    <property type="project" value="TreeGrafter"/>
</dbReference>
<dbReference type="CDD" id="cd03671">
    <property type="entry name" value="NUDIX_Ap4A_hydrolase_plant_like"/>
    <property type="match status" value="1"/>
</dbReference>
<dbReference type="FunFam" id="3.90.79.10:FF:000001">
    <property type="entry name" value="RNA pyrophosphohydrolase"/>
    <property type="match status" value="1"/>
</dbReference>
<dbReference type="Gene3D" id="3.90.79.10">
    <property type="entry name" value="Nucleoside Triphosphate Pyrophosphohydrolase"/>
    <property type="match status" value="1"/>
</dbReference>
<dbReference type="HAMAP" id="MF_00298">
    <property type="entry name" value="Nudix_RppH"/>
    <property type="match status" value="1"/>
</dbReference>
<dbReference type="InterPro" id="IPR020476">
    <property type="entry name" value="Nudix_hydrolase"/>
</dbReference>
<dbReference type="InterPro" id="IPR015797">
    <property type="entry name" value="NUDIX_hydrolase-like_dom_sf"/>
</dbReference>
<dbReference type="InterPro" id="IPR020084">
    <property type="entry name" value="NUDIX_hydrolase_CS"/>
</dbReference>
<dbReference type="InterPro" id="IPR000086">
    <property type="entry name" value="NUDIX_hydrolase_dom"/>
</dbReference>
<dbReference type="InterPro" id="IPR022927">
    <property type="entry name" value="RppH"/>
</dbReference>
<dbReference type="NCBIfam" id="NF001934">
    <property type="entry name" value="PRK00714.1-1"/>
    <property type="match status" value="1"/>
</dbReference>
<dbReference type="NCBIfam" id="NF001937">
    <property type="entry name" value="PRK00714.1-4"/>
    <property type="match status" value="1"/>
</dbReference>
<dbReference type="NCBIfam" id="NF001938">
    <property type="entry name" value="PRK00714.1-5"/>
    <property type="match status" value="1"/>
</dbReference>
<dbReference type="PANTHER" id="PTHR23114">
    <property type="entry name" value="M7GPPPN-MRNA HYDROLASE"/>
    <property type="match status" value="1"/>
</dbReference>
<dbReference type="PANTHER" id="PTHR23114:SF17">
    <property type="entry name" value="M7GPPPN-MRNA HYDROLASE"/>
    <property type="match status" value="1"/>
</dbReference>
<dbReference type="Pfam" id="PF00293">
    <property type="entry name" value="NUDIX"/>
    <property type="match status" value="1"/>
</dbReference>
<dbReference type="PRINTS" id="PR00502">
    <property type="entry name" value="NUDIXFAMILY"/>
</dbReference>
<dbReference type="SUPFAM" id="SSF55811">
    <property type="entry name" value="Nudix"/>
    <property type="match status" value="1"/>
</dbReference>
<dbReference type="PROSITE" id="PS51462">
    <property type="entry name" value="NUDIX"/>
    <property type="match status" value="1"/>
</dbReference>
<dbReference type="PROSITE" id="PS00893">
    <property type="entry name" value="NUDIX_BOX"/>
    <property type="match status" value="1"/>
</dbReference>
<reference key="1">
    <citation type="journal article" date="2010" name="BMC Genomics">
        <title>A genomic perspective on the potential of Actinobacillus succinogenes for industrial succinate production.</title>
        <authorList>
            <person name="McKinlay J.B."/>
            <person name="Laivenieks M."/>
            <person name="Schindler B.D."/>
            <person name="McKinlay A.A."/>
            <person name="Siddaramappa S."/>
            <person name="Challacombe J.F."/>
            <person name="Lowry S.R."/>
            <person name="Clum A."/>
            <person name="Lapidus A.L."/>
            <person name="Burkhart K.B."/>
            <person name="Harkins V."/>
            <person name="Vieille C."/>
        </authorList>
    </citation>
    <scope>NUCLEOTIDE SEQUENCE [LARGE SCALE GENOMIC DNA]</scope>
    <source>
        <strain>ATCC 55618 / DSM 22257 / CCUG 43843 / 130Z</strain>
    </source>
</reference>
<comment type="function">
    <text evidence="1">Accelerates the degradation of transcripts by removing pyrophosphate from the 5'-end of triphosphorylated RNA, leading to a more labile monophosphorylated state that can stimulate subsequent ribonuclease cleavage.</text>
</comment>
<comment type="cofactor">
    <cofactor evidence="1">
        <name>a divalent metal cation</name>
        <dbReference type="ChEBI" id="CHEBI:60240"/>
    </cofactor>
</comment>
<comment type="similarity">
    <text evidence="1">Belongs to the Nudix hydrolase family. RppH subfamily.</text>
</comment>
<accession>A6VMA3</accession>
<keyword id="KW-0378">Hydrolase</keyword>
<keyword id="KW-1185">Reference proteome</keyword>
<organism>
    <name type="scientific">Actinobacillus succinogenes (strain ATCC 55618 / DSM 22257 / CCUG 43843 / 130Z)</name>
    <dbReference type="NCBI Taxonomy" id="339671"/>
    <lineage>
        <taxon>Bacteria</taxon>
        <taxon>Pseudomonadati</taxon>
        <taxon>Pseudomonadota</taxon>
        <taxon>Gammaproteobacteria</taxon>
        <taxon>Pasteurellales</taxon>
        <taxon>Pasteurellaceae</taxon>
        <taxon>Actinobacillus</taxon>
    </lineage>
</organism>
<sequence>MIDFDGYRPNVGIVICNRKGQVLWAKRYGQNSWQFPQGGINEGETPEQAMFRELFEEVGLQKKDVRVLYASKLWLRYKLPKRLLRHDSKPMCIGQKQRWFLLQLVCHEKEIDMHRTKSPEFDGWRWVSFWYPVRQVISFKRDVYRRAMKEFAQFLFDPTKNDTALFQHHETKKAETGKKQPYYHKYAPQNKKGRKRR</sequence>
<feature type="chain" id="PRO_1000078950" description="RNA pyrophosphohydrolase">
    <location>
        <begin position="1"/>
        <end position="197"/>
    </location>
</feature>
<feature type="domain" description="Nudix hydrolase" evidence="1">
    <location>
        <begin position="6"/>
        <end position="149"/>
    </location>
</feature>
<feature type="region of interest" description="Disordered" evidence="2">
    <location>
        <begin position="170"/>
        <end position="197"/>
    </location>
</feature>
<feature type="short sequence motif" description="Nudix box">
    <location>
        <begin position="38"/>
        <end position="59"/>
    </location>
</feature>
<gene>
    <name evidence="1" type="primary">rppH</name>
    <name evidence="1" type="synonym">nudH</name>
    <name type="ordered locus">Asuc_0728</name>
</gene>
<proteinExistence type="inferred from homology"/>
<evidence type="ECO:0000255" key="1">
    <source>
        <dbReference type="HAMAP-Rule" id="MF_00298"/>
    </source>
</evidence>
<evidence type="ECO:0000256" key="2">
    <source>
        <dbReference type="SAM" id="MobiDB-lite"/>
    </source>
</evidence>